<sequence>MVKYLSQSEAINVDQELFNDYKFSVDQLMELAGLSCAHAISKCFPTDKYGRVLICCGPGNNGGDGLVCARHLALMGYTPTIYYPKPTAKPLYENLSHQCKLMEICRVEDCPAINEAASNFDLIVDALFGFSFKPPVRAEFVAIVELMQQTTLPIASVDIPSGWDVEKGKVNDSDLEPDLLISLTAPKICARNFKGRYHYLGGRFVPPALQRKYDLNLPTYPGNELCLKL</sequence>
<organism>
    <name type="scientific">Drosophila ananassae</name>
    <name type="common">Fruit fly</name>
    <dbReference type="NCBI Taxonomy" id="7217"/>
    <lineage>
        <taxon>Eukaryota</taxon>
        <taxon>Metazoa</taxon>
        <taxon>Ecdysozoa</taxon>
        <taxon>Arthropoda</taxon>
        <taxon>Hexapoda</taxon>
        <taxon>Insecta</taxon>
        <taxon>Pterygota</taxon>
        <taxon>Neoptera</taxon>
        <taxon>Endopterygota</taxon>
        <taxon>Diptera</taxon>
        <taxon>Brachycera</taxon>
        <taxon>Muscomorpha</taxon>
        <taxon>Ephydroidea</taxon>
        <taxon>Drosophilidae</taxon>
        <taxon>Drosophila</taxon>
        <taxon>Sophophora</taxon>
    </lineage>
</organism>
<proteinExistence type="inferred from homology"/>
<comment type="function">
    <text evidence="1">Catalyzes the epimerization of the S- and R-forms of NAD(P)HX, a damaged form of NAD(P)H that is a result of enzymatic or heat-dependent hydration. This is a prerequisite for the S-specific NAD(P)H-hydrate dehydratase to allow the repair of both epimers of NAD(P)HX.</text>
</comment>
<comment type="catalytic activity">
    <reaction>
        <text>(6R)-NADHX = (6S)-NADHX</text>
        <dbReference type="Rhea" id="RHEA:32215"/>
        <dbReference type="ChEBI" id="CHEBI:64074"/>
        <dbReference type="ChEBI" id="CHEBI:64075"/>
        <dbReference type="EC" id="5.1.99.6"/>
    </reaction>
</comment>
<comment type="catalytic activity">
    <reaction>
        <text>(6R)-NADPHX = (6S)-NADPHX</text>
        <dbReference type="Rhea" id="RHEA:32227"/>
        <dbReference type="ChEBI" id="CHEBI:64076"/>
        <dbReference type="ChEBI" id="CHEBI:64077"/>
        <dbReference type="EC" id="5.1.99.6"/>
    </reaction>
</comment>
<comment type="cofactor">
    <cofactor evidence="1">
        <name>K(+)</name>
        <dbReference type="ChEBI" id="CHEBI:29103"/>
    </cofactor>
    <text evidence="1">Binds 1 potassium ion per subunit.</text>
</comment>
<comment type="similarity">
    <text evidence="1">Belongs to the NnrE/AIBP family.</text>
</comment>
<accession>B3N0Q8</accession>
<name>NNRE_DROAN</name>
<reference evidence="2" key="1">
    <citation type="journal article" date="2007" name="Nature">
        <title>Evolution of genes and genomes on the Drosophila phylogeny.</title>
        <authorList>
            <consortium name="Drosophila 12 genomes consortium"/>
        </authorList>
    </citation>
    <scope>NUCLEOTIDE SEQUENCE [LARGE SCALE GENOMIC DNA]</scope>
    <source>
        <strain evidence="2">Tucson 14024-0371.13</strain>
    </source>
</reference>
<feature type="chain" id="PRO_0000379425" description="NAD(P)H-hydrate epimerase">
    <location>
        <begin position="1"/>
        <end position="229"/>
    </location>
</feature>
<feature type="domain" description="YjeF N-terminal" evidence="1">
    <location>
        <begin position="10"/>
        <end position="217"/>
    </location>
</feature>
<feature type="binding site" evidence="1">
    <location>
        <begin position="60"/>
        <end position="64"/>
    </location>
    <ligand>
        <name>(6S)-NADPHX</name>
        <dbReference type="ChEBI" id="CHEBI:64076"/>
    </ligand>
</feature>
<feature type="binding site" evidence="1">
    <location>
        <position position="61"/>
    </location>
    <ligand>
        <name>K(+)</name>
        <dbReference type="ChEBI" id="CHEBI:29103"/>
    </ligand>
</feature>
<feature type="binding site" evidence="1">
    <location>
        <position position="125"/>
    </location>
    <ligand>
        <name>K(+)</name>
        <dbReference type="ChEBI" id="CHEBI:29103"/>
    </ligand>
</feature>
<feature type="binding site" evidence="1">
    <location>
        <begin position="129"/>
        <end position="135"/>
    </location>
    <ligand>
        <name>(6S)-NADPHX</name>
        <dbReference type="ChEBI" id="CHEBI:64076"/>
    </ligand>
</feature>
<feature type="binding site" evidence="1">
    <location>
        <position position="158"/>
    </location>
    <ligand>
        <name>(6S)-NADPHX</name>
        <dbReference type="ChEBI" id="CHEBI:64076"/>
    </ligand>
</feature>
<feature type="binding site" evidence="1">
    <location>
        <position position="161"/>
    </location>
    <ligand>
        <name>K(+)</name>
        <dbReference type="ChEBI" id="CHEBI:29103"/>
    </ligand>
</feature>
<gene>
    <name type="ORF">GF19489</name>
</gene>
<protein>
    <recommendedName>
        <fullName evidence="1">NAD(P)H-hydrate epimerase</fullName>
        <ecNumber>5.1.99.6</ecNumber>
    </recommendedName>
    <alternativeName>
        <fullName evidence="1">NAD(P)HX epimerase</fullName>
    </alternativeName>
</protein>
<dbReference type="EC" id="5.1.99.6"/>
<dbReference type="EMBL" id="CH902644">
    <property type="protein sequence ID" value="EDV34787.1"/>
    <property type="molecule type" value="Genomic_DNA"/>
</dbReference>
<dbReference type="SMR" id="B3N0Q8"/>
<dbReference type="FunCoup" id="B3N0Q8">
    <property type="interactions" value="1372"/>
</dbReference>
<dbReference type="STRING" id="7217.B3N0Q8"/>
<dbReference type="EnsemblMetazoa" id="FBtr0124189">
    <property type="protein sequence ID" value="FBpp0122681"/>
    <property type="gene ID" value="FBgn0096496"/>
</dbReference>
<dbReference type="EnsemblMetazoa" id="XM_001967107.4">
    <property type="protein sequence ID" value="XP_001967143.2"/>
    <property type="gene ID" value="LOC6502246"/>
</dbReference>
<dbReference type="GeneID" id="6502246"/>
<dbReference type="KEGG" id="dan:6502246"/>
<dbReference type="eggNOG" id="KOG2585">
    <property type="taxonomic scope" value="Eukaryota"/>
</dbReference>
<dbReference type="HOGENOM" id="CLU_024853_3_0_1"/>
<dbReference type="InParanoid" id="B3N0Q8"/>
<dbReference type="OMA" id="RHLFHYG"/>
<dbReference type="OrthoDB" id="10064708at2759"/>
<dbReference type="PhylomeDB" id="B3N0Q8"/>
<dbReference type="Proteomes" id="UP000007801">
    <property type="component" value="Unassembled WGS sequence"/>
</dbReference>
<dbReference type="GO" id="GO:0005739">
    <property type="term" value="C:mitochondrion"/>
    <property type="evidence" value="ECO:0007669"/>
    <property type="project" value="TreeGrafter"/>
</dbReference>
<dbReference type="GO" id="GO:0046872">
    <property type="term" value="F:metal ion binding"/>
    <property type="evidence" value="ECO:0007669"/>
    <property type="project" value="UniProtKB-KW"/>
</dbReference>
<dbReference type="GO" id="GO:0052856">
    <property type="term" value="F:NAD(P)HX epimerase activity"/>
    <property type="evidence" value="ECO:0007669"/>
    <property type="project" value="UniProtKB-UniRule"/>
</dbReference>
<dbReference type="GO" id="GO:0000166">
    <property type="term" value="F:nucleotide binding"/>
    <property type="evidence" value="ECO:0007669"/>
    <property type="project" value="UniProtKB-KW"/>
</dbReference>
<dbReference type="FunFam" id="3.40.50.10260:FF:000013">
    <property type="entry name" value="NAD(P)H-hydrate epimerase"/>
    <property type="match status" value="1"/>
</dbReference>
<dbReference type="Gene3D" id="3.40.50.10260">
    <property type="entry name" value="YjeF N-terminal domain"/>
    <property type="match status" value="1"/>
</dbReference>
<dbReference type="HAMAP" id="MF_01966">
    <property type="entry name" value="NADHX_epimerase"/>
    <property type="match status" value="1"/>
</dbReference>
<dbReference type="InterPro" id="IPR004443">
    <property type="entry name" value="YjeF_N_dom"/>
</dbReference>
<dbReference type="InterPro" id="IPR036652">
    <property type="entry name" value="YjeF_N_dom_sf"/>
</dbReference>
<dbReference type="InterPro" id="IPR032976">
    <property type="entry name" value="YJEFN_prot_NAXE-like"/>
</dbReference>
<dbReference type="NCBIfam" id="TIGR00197">
    <property type="entry name" value="yjeF_nterm"/>
    <property type="match status" value="1"/>
</dbReference>
<dbReference type="PANTHER" id="PTHR13232">
    <property type="entry name" value="NAD(P)H-HYDRATE EPIMERASE"/>
    <property type="match status" value="1"/>
</dbReference>
<dbReference type="PANTHER" id="PTHR13232:SF10">
    <property type="entry name" value="NAD(P)H-HYDRATE EPIMERASE"/>
    <property type="match status" value="1"/>
</dbReference>
<dbReference type="Pfam" id="PF03853">
    <property type="entry name" value="YjeF_N"/>
    <property type="match status" value="1"/>
</dbReference>
<dbReference type="SUPFAM" id="SSF64153">
    <property type="entry name" value="YjeF N-terminal domain-like"/>
    <property type="match status" value="1"/>
</dbReference>
<dbReference type="PROSITE" id="PS51385">
    <property type="entry name" value="YJEF_N"/>
    <property type="match status" value="1"/>
</dbReference>
<keyword id="KW-0413">Isomerase</keyword>
<keyword id="KW-0479">Metal-binding</keyword>
<keyword id="KW-0520">NAD</keyword>
<keyword id="KW-0521">NADP</keyword>
<keyword id="KW-0547">Nucleotide-binding</keyword>
<keyword id="KW-0630">Potassium</keyword>
<keyword id="KW-1185">Reference proteome</keyword>
<evidence type="ECO:0000255" key="1">
    <source>
        <dbReference type="HAMAP-Rule" id="MF_03159"/>
    </source>
</evidence>
<evidence type="ECO:0000312" key="2">
    <source>
        <dbReference type="EMBL" id="EDV34787.1"/>
    </source>
</evidence>